<dbReference type="EC" id="7.1.2.2" evidence="1"/>
<dbReference type="EMBL" id="AP006627">
    <property type="protein sequence ID" value="BAD66382.1"/>
    <property type="molecule type" value="Genomic_DNA"/>
</dbReference>
<dbReference type="RefSeq" id="WP_011248685.1">
    <property type="nucleotide sequence ID" value="NC_006582.1"/>
</dbReference>
<dbReference type="SMR" id="Q5WB78"/>
<dbReference type="STRING" id="66692.ABC3851"/>
<dbReference type="KEGG" id="bcl:ABC3851"/>
<dbReference type="eggNOG" id="COG0055">
    <property type="taxonomic scope" value="Bacteria"/>
</dbReference>
<dbReference type="HOGENOM" id="CLU_022398_0_2_9"/>
<dbReference type="OrthoDB" id="9801639at2"/>
<dbReference type="Proteomes" id="UP000001168">
    <property type="component" value="Chromosome"/>
</dbReference>
<dbReference type="GO" id="GO:0005886">
    <property type="term" value="C:plasma membrane"/>
    <property type="evidence" value="ECO:0007669"/>
    <property type="project" value="UniProtKB-SubCell"/>
</dbReference>
<dbReference type="GO" id="GO:0045259">
    <property type="term" value="C:proton-transporting ATP synthase complex"/>
    <property type="evidence" value="ECO:0007669"/>
    <property type="project" value="UniProtKB-KW"/>
</dbReference>
<dbReference type="GO" id="GO:0005524">
    <property type="term" value="F:ATP binding"/>
    <property type="evidence" value="ECO:0007669"/>
    <property type="project" value="UniProtKB-UniRule"/>
</dbReference>
<dbReference type="GO" id="GO:0016887">
    <property type="term" value="F:ATP hydrolysis activity"/>
    <property type="evidence" value="ECO:0007669"/>
    <property type="project" value="InterPro"/>
</dbReference>
<dbReference type="GO" id="GO:0046933">
    <property type="term" value="F:proton-transporting ATP synthase activity, rotational mechanism"/>
    <property type="evidence" value="ECO:0007669"/>
    <property type="project" value="UniProtKB-UniRule"/>
</dbReference>
<dbReference type="CDD" id="cd18110">
    <property type="entry name" value="ATP-synt_F1_beta_C"/>
    <property type="match status" value="1"/>
</dbReference>
<dbReference type="CDD" id="cd18115">
    <property type="entry name" value="ATP-synt_F1_beta_N"/>
    <property type="match status" value="1"/>
</dbReference>
<dbReference type="CDD" id="cd01133">
    <property type="entry name" value="F1-ATPase_beta_CD"/>
    <property type="match status" value="1"/>
</dbReference>
<dbReference type="FunFam" id="1.10.1140.10:FF:000001">
    <property type="entry name" value="ATP synthase subunit beta"/>
    <property type="match status" value="1"/>
</dbReference>
<dbReference type="FunFam" id="2.40.10.170:FF:000005">
    <property type="entry name" value="ATP synthase subunit beta"/>
    <property type="match status" value="1"/>
</dbReference>
<dbReference type="FunFam" id="3.40.50.300:FF:000004">
    <property type="entry name" value="ATP synthase subunit beta"/>
    <property type="match status" value="1"/>
</dbReference>
<dbReference type="Gene3D" id="2.40.10.170">
    <property type="match status" value="1"/>
</dbReference>
<dbReference type="Gene3D" id="1.10.1140.10">
    <property type="entry name" value="Bovine Mitochondrial F1-atpase, Atp Synthase Beta Chain, Chain D, domain 3"/>
    <property type="match status" value="1"/>
</dbReference>
<dbReference type="Gene3D" id="3.40.50.300">
    <property type="entry name" value="P-loop containing nucleotide triphosphate hydrolases"/>
    <property type="match status" value="1"/>
</dbReference>
<dbReference type="HAMAP" id="MF_01347">
    <property type="entry name" value="ATP_synth_beta_bact"/>
    <property type="match status" value="1"/>
</dbReference>
<dbReference type="InterPro" id="IPR003593">
    <property type="entry name" value="AAA+_ATPase"/>
</dbReference>
<dbReference type="InterPro" id="IPR055190">
    <property type="entry name" value="ATP-synt_VA_C"/>
</dbReference>
<dbReference type="InterPro" id="IPR005722">
    <property type="entry name" value="ATP_synth_F1_bsu"/>
</dbReference>
<dbReference type="InterPro" id="IPR020003">
    <property type="entry name" value="ATPase_a/bsu_AS"/>
</dbReference>
<dbReference type="InterPro" id="IPR050053">
    <property type="entry name" value="ATPase_alpha/beta_chains"/>
</dbReference>
<dbReference type="InterPro" id="IPR004100">
    <property type="entry name" value="ATPase_F1/V1/A1_a/bsu_N"/>
</dbReference>
<dbReference type="InterPro" id="IPR036121">
    <property type="entry name" value="ATPase_F1/V1/A1_a/bsu_N_sf"/>
</dbReference>
<dbReference type="InterPro" id="IPR000194">
    <property type="entry name" value="ATPase_F1/V1/A1_a/bsu_nucl-bd"/>
</dbReference>
<dbReference type="InterPro" id="IPR024034">
    <property type="entry name" value="ATPase_F1/V1_b/a_C"/>
</dbReference>
<dbReference type="InterPro" id="IPR027417">
    <property type="entry name" value="P-loop_NTPase"/>
</dbReference>
<dbReference type="NCBIfam" id="TIGR01039">
    <property type="entry name" value="atpD"/>
    <property type="match status" value="1"/>
</dbReference>
<dbReference type="PANTHER" id="PTHR15184">
    <property type="entry name" value="ATP SYNTHASE"/>
    <property type="match status" value="1"/>
</dbReference>
<dbReference type="PANTHER" id="PTHR15184:SF71">
    <property type="entry name" value="ATP SYNTHASE SUBUNIT BETA, MITOCHONDRIAL"/>
    <property type="match status" value="1"/>
</dbReference>
<dbReference type="Pfam" id="PF00006">
    <property type="entry name" value="ATP-synt_ab"/>
    <property type="match status" value="1"/>
</dbReference>
<dbReference type="Pfam" id="PF02874">
    <property type="entry name" value="ATP-synt_ab_N"/>
    <property type="match status" value="1"/>
</dbReference>
<dbReference type="Pfam" id="PF22919">
    <property type="entry name" value="ATP-synt_VA_C"/>
    <property type="match status" value="1"/>
</dbReference>
<dbReference type="SMART" id="SM00382">
    <property type="entry name" value="AAA"/>
    <property type="match status" value="1"/>
</dbReference>
<dbReference type="SUPFAM" id="SSF47917">
    <property type="entry name" value="C-terminal domain of alpha and beta subunits of F1 ATP synthase"/>
    <property type="match status" value="1"/>
</dbReference>
<dbReference type="SUPFAM" id="SSF50615">
    <property type="entry name" value="N-terminal domain of alpha and beta subunits of F1 ATP synthase"/>
    <property type="match status" value="1"/>
</dbReference>
<dbReference type="SUPFAM" id="SSF52540">
    <property type="entry name" value="P-loop containing nucleoside triphosphate hydrolases"/>
    <property type="match status" value="1"/>
</dbReference>
<dbReference type="PROSITE" id="PS00152">
    <property type="entry name" value="ATPASE_ALPHA_BETA"/>
    <property type="match status" value="1"/>
</dbReference>
<sequence>MSTGRIIQITGPVVDVKFPSGQLPEINNALTVNQQGAADGAVDVKVTLEVALHLGNDTVRTVAMGSTDGLMRGTEVLDTGGPISVPVGEATLGRVFNVLGEEIDLQEPVAEGTRRDPIHREAPSFEELTTTTEILETGIKVVDLLAPYTKGGKIGLFGGAGVGKTVLIQELINNVALEHGGISVFAGVGERTREGNDLYHEMKDAGVITKTAMVFGQMNEPPGARMRVALTGLTMAEYFRDEQGADVLLFIDNIFRFTQAGSEVSALLGRMPSAVGYQPTLATEMGQLQERITSTKKGSVTSIQAIYVPADDYTDPAPATTFAHLDATTNLERKLTEQGIYPAVDPLASTSRALSPEIVGEEHYNVARGVQQTLQKYRELQDIIAILGMEELSEEDKLIVARARRIQFFLSQNFHVAEQFTGQPGSYVPVKETIQGFKDILAGKYDDLPEDAFRLVGRIEEVVEKAKQMA</sequence>
<protein>
    <recommendedName>
        <fullName evidence="1">ATP synthase subunit beta</fullName>
        <ecNumber evidence="1">7.1.2.2</ecNumber>
    </recommendedName>
    <alternativeName>
        <fullName evidence="1">ATP synthase F1 sector subunit beta</fullName>
    </alternativeName>
    <alternativeName>
        <fullName evidence="1">F-ATPase subunit beta</fullName>
    </alternativeName>
</protein>
<evidence type="ECO:0000255" key="1">
    <source>
        <dbReference type="HAMAP-Rule" id="MF_01347"/>
    </source>
</evidence>
<reference key="1">
    <citation type="submission" date="2003-10" db="EMBL/GenBank/DDBJ databases">
        <title>The complete genome sequence of the alkaliphilic Bacillus clausii KSM-K16.</title>
        <authorList>
            <person name="Takaki Y."/>
            <person name="Kageyama Y."/>
            <person name="Shimamura S."/>
            <person name="Suzuki H."/>
            <person name="Nishi S."/>
            <person name="Hatada Y."/>
            <person name="Kawai S."/>
            <person name="Ito S."/>
            <person name="Horikoshi K."/>
        </authorList>
    </citation>
    <scope>NUCLEOTIDE SEQUENCE [LARGE SCALE GENOMIC DNA]</scope>
    <source>
        <strain>KSM-K16</strain>
    </source>
</reference>
<name>ATPB_SHOC1</name>
<accession>Q5WB78</accession>
<comment type="function">
    <text evidence="1">Produces ATP from ADP in the presence of a proton gradient across the membrane. The catalytic sites are hosted primarily by the beta subunits.</text>
</comment>
<comment type="catalytic activity">
    <reaction evidence="1">
        <text>ATP + H2O + 4 H(+)(in) = ADP + phosphate + 5 H(+)(out)</text>
        <dbReference type="Rhea" id="RHEA:57720"/>
        <dbReference type="ChEBI" id="CHEBI:15377"/>
        <dbReference type="ChEBI" id="CHEBI:15378"/>
        <dbReference type="ChEBI" id="CHEBI:30616"/>
        <dbReference type="ChEBI" id="CHEBI:43474"/>
        <dbReference type="ChEBI" id="CHEBI:456216"/>
        <dbReference type="EC" id="7.1.2.2"/>
    </reaction>
</comment>
<comment type="subunit">
    <text evidence="1">F-type ATPases have 2 components, CF(1) - the catalytic core - and CF(0) - the membrane proton channel. CF(1) has five subunits: alpha(3), beta(3), gamma(1), delta(1), epsilon(1). CF(0) has three main subunits: a(1), b(2) and c(9-12). The alpha and beta chains form an alternating ring which encloses part of the gamma chain. CF(1) is attached to CF(0) by a central stalk formed by the gamma and epsilon chains, while a peripheral stalk is formed by the delta and b chains.</text>
</comment>
<comment type="subcellular location">
    <subcellularLocation>
        <location evidence="1">Cell membrane</location>
        <topology evidence="1">Peripheral membrane protein</topology>
    </subcellularLocation>
</comment>
<comment type="similarity">
    <text evidence="1">Belongs to the ATPase alpha/beta chains family.</text>
</comment>
<keyword id="KW-0066">ATP synthesis</keyword>
<keyword id="KW-0067">ATP-binding</keyword>
<keyword id="KW-1003">Cell membrane</keyword>
<keyword id="KW-0139">CF(1)</keyword>
<keyword id="KW-0375">Hydrogen ion transport</keyword>
<keyword id="KW-0406">Ion transport</keyword>
<keyword id="KW-0472">Membrane</keyword>
<keyword id="KW-0547">Nucleotide-binding</keyword>
<keyword id="KW-1185">Reference proteome</keyword>
<keyword id="KW-1278">Translocase</keyword>
<keyword id="KW-0813">Transport</keyword>
<proteinExistence type="inferred from homology"/>
<feature type="chain" id="PRO_0000254209" description="ATP synthase subunit beta">
    <location>
        <begin position="1"/>
        <end position="470"/>
    </location>
</feature>
<feature type="binding site" evidence="1">
    <location>
        <begin position="158"/>
        <end position="165"/>
    </location>
    <ligand>
        <name>ATP</name>
        <dbReference type="ChEBI" id="CHEBI:30616"/>
    </ligand>
</feature>
<organism>
    <name type="scientific">Shouchella clausii (strain KSM-K16)</name>
    <name type="common">Alkalihalobacillus clausii</name>
    <dbReference type="NCBI Taxonomy" id="66692"/>
    <lineage>
        <taxon>Bacteria</taxon>
        <taxon>Bacillati</taxon>
        <taxon>Bacillota</taxon>
        <taxon>Bacilli</taxon>
        <taxon>Bacillales</taxon>
        <taxon>Bacillaceae</taxon>
        <taxon>Shouchella</taxon>
    </lineage>
</organism>
<gene>
    <name evidence="1" type="primary">atpD</name>
    <name type="ordered locus">ABC3851</name>
</gene>